<evidence type="ECO:0000255" key="1">
    <source>
        <dbReference type="HAMAP-Rule" id="MF_00067"/>
    </source>
</evidence>
<name>GMHA_CAMJ8</name>
<reference key="1">
    <citation type="journal article" date="2007" name="J. Bacteriol.">
        <title>The complete genome sequence of Campylobacter jejuni strain 81116 (NCTC11828).</title>
        <authorList>
            <person name="Pearson B.M."/>
            <person name="Gaskin D.J.H."/>
            <person name="Segers R.P.A.M."/>
            <person name="Wells J.M."/>
            <person name="Nuijten P.J.M."/>
            <person name="van Vliet A.H.M."/>
        </authorList>
    </citation>
    <scope>NUCLEOTIDE SEQUENCE [LARGE SCALE GENOMIC DNA]</scope>
    <source>
        <strain>81116 / NCTC 11828</strain>
    </source>
</reference>
<proteinExistence type="inferred from homology"/>
<gene>
    <name evidence="1" type="primary">gmhA</name>
    <name type="ordered locus">C8J_1095</name>
</gene>
<dbReference type="EC" id="5.3.1.28" evidence="1"/>
<dbReference type="EMBL" id="CP000814">
    <property type="protein sequence ID" value="ABV52694.1"/>
    <property type="molecule type" value="Genomic_DNA"/>
</dbReference>
<dbReference type="RefSeq" id="WP_002877119.1">
    <property type="nucleotide sequence ID" value="NC_009839.1"/>
</dbReference>
<dbReference type="SMR" id="A8FMK7"/>
<dbReference type="KEGG" id="cju:C8J_1095"/>
<dbReference type="HOGENOM" id="CLU_080999_4_0_7"/>
<dbReference type="UniPathway" id="UPA00041">
    <property type="reaction ID" value="UER00436"/>
</dbReference>
<dbReference type="GO" id="GO:0005737">
    <property type="term" value="C:cytoplasm"/>
    <property type="evidence" value="ECO:0007669"/>
    <property type="project" value="UniProtKB-SubCell"/>
</dbReference>
<dbReference type="GO" id="GO:0097367">
    <property type="term" value="F:carbohydrate derivative binding"/>
    <property type="evidence" value="ECO:0007669"/>
    <property type="project" value="InterPro"/>
</dbReference>
<dbReference type="GO" id="GO:0008968">
    <property type="term" value="F:D-sedoheptulose 7-phosphate isomerase activity"/>
    <property type="evidence" value="ECO:0007669"/>
    <property type="project" value="UniProtKB-UniRule"/>
</dbReference>
<dbReference type="GO" id="GO:0008270">
    <property type="term" value="F:zinc ion binding"/>
    <property type="evidence" value="ECO:0007669"/>
    <property type="project" value="UniProtKB-UniRule"/>
</dbReference>
<dbReference type="GO" id="GO:0005975">
    <property type="term" value="P:carbohydrate metabolic process"/>
    <property type="evidence" value="ECO:0007669"/>
    <property type="project" value="UniProtKB-UniRule"/>
</dbReference>
<dbReference type="GO" id="GO:2001061">
    <property type="term" value="P:D-glycero-D-manno-heptose 7-phosphate biosynthetic process"/>
    <property type="evidence" value="ECO:0007669"/>
    <property type="project" value="UniProtKB-UniPathway"/>
</dbReference>
<dbReference type="CDD" id="cd05006">
    <property type="entry name" value="SIS_GmhA"/>
    <property type="match status" value="1"/>
</dbReference>
<dbReference type="Gene3D" id="3.40.50.10490">
    <property type="entry name" value="Glucose-6-phosphate isomerase like protein, domain 1"/>
    <property type="match status" value="1"/>
</dbReference>
<dbReference type="HAMAP" id="MF_00067">
    <property type="entry name" value="GmhA"/>
    <property type="match status" value="1"/>
</dbReference>
<dbReference type="InterPro" id="IPR035461">
    <property type="entry name" value="GmhA/DiaA"/>
</dbReference>
<dbReference type="InterPro" id="IPR004515">
    <property type="entry name" value="Phosphoheptose_Isoase"/>
</dbReference>
<dbReference type="InterPro" id="IPR001347">
    <property type="entry name" value="SIS_dom"/>
</dbReference>
<dbReference type="InterPro" id="IPR046348">
    <property type="entry name" value="SIS_dom_sf"/>
</dbReference>
<dbReference type="InterPro" id="IPR050099">
    <property type="entry name" value="SIS_GmhA/DiaA_subfam"/>
</dbReference>
<dbReference type="NCBIfam" id="TIGR00441">
    <property type="entry name" value="gmhA"/>
    <property type="match status" value="1"/>
</dbReference>
<dbReference type="PANTHER" id="PTHR30390:SF6">
    <property type="entry name" value="DNAA INITIATOR-ASSOCIATING PROTEIN DIAA"/>
    <property type="match status" value="1"/>
</dbReference>
<dbReference type="PANTHER" id="PTHR30390">
    <property type="entry name" value="SEDOHEPTULOSE 7-PHOSPHATE ISOMERASE / DNAA INITIATOR-ASSOCIATING FACTOR FOR REPLICATION INITIATION"/>
    <property type="match status" value="1"/>
</dbReference>
<dbReference type="Pfam" id="PF13580">
    <property type="entry name" value="SIS_2"/>
    <property type="match status" value="1"/>
</dbReference>
<dbReference type="SUPFAM" id="SSF53697">
    <property type="entry name" value="SIS domain"/>
    <property type="match status" value="1"/>
</dbReference>
<dbReference type="PROSITE" id="PS51464">
    <property type="entry name" value="SIS"/>
    <property type="match status" value="1"/>
</dbReference>
<keyword id="KW-0119">Carbohydrate metabolism</keyword>
<keyword id="KW-0963">Cytoplasm</keyword>
<keyword id="KW-0413">Isomerase</keyword>
<keyword id="KW-0479">Metal-binding</keyword>
<keyword id="KW-0862">Zinc</keyword>
<organism>
    <name type="scientific">Campylobacter jejuni subsp. jejuni serotype O:6 (strain 81116 / NCTC 11828)</name>
    <dbReference type="NCBI Taxonomy" id="407148"/>
    <lineage>
        <taxon>Bacteria</taxon>
        <taxon>Pseudomonadati</taxon>
        <taxon>Campylobacterota</taxon>
        <taxon>Epsilonproteobacteria</taxon>
        <taxon>Campylobacterales</taxon>
        <taxon>Campylobacteraceae</taxon>
        <taxon>Campylobacter</taxon>
    </lineage>
</organism>
<protein>
    <recommendedName>
        <fullName evidence="1">Phosphoheptose isomerase</fullName>
        <ecNumber evidence="1">5.3.1.28</ecNumber>
    </recommendedName>
    <alternativeName>
        <fullName evidence="1">Sedoheptulose 7-phosphate isomerase</fullName>
    </alternativeName>
</protein>
<accession>A8FMK7</accession>
<comment type="function">
    <text evidence="1">Catalyzes the isomerization of sedoheptulose 7-phosphate in D-glycero-D-manno-heptose 7-phosphate.</text>
</comment>
<comment type="catalytic activity">
    <reaction evidence="1">
        <text>2 D-sedoheptulose 7-phosphate = D-glycero-alpha-D-manno-heptose 7-phosphate + D-glycero-beta-D-manno-heptose 7-phosphate</text>
        <dbReference type="Rhea" id="RHEA:27489"/>
        <dbReference type="ChEBI" id="CHEBI:57483"/>
        <dbReference type="ChEBI" id="CHEBI:60203"/>
        <dbReference type="ChEBI" id="CHEBI:60204"/>
        <dbReference type="EC" id="5.3.1.28"/>
    </reaction>
</comment>
<comment type="cofactor">
    <cofactor evidence="1">
        <name>Zn(2+)</name>
        <dbReference type="ChEBI" id="CHEBI:29105"/>
    </cofactor>
    <text evidence="1">Binds 1 zinc ion per subunit.</text>
</comment>
<comment type="pathway">
    <text evidence="1">Carbohydrate biosynthesis; D-glycero-D-manno-heptose 7-phosphate biosynthesis; D-glycero-alpha-D-manno-heptose 7-phosphate and D-glycero-beta-D-manno-heptose 7-phosphate from sedoheptulose 7-phosphate: step 1/1.</text>
</comment>
<comment type="subunit">
    <text evidence="1">Homotetramer.</text>
</comment>
<comment type="subcellular location">
    <subcellularLocation>
        <location evidence="1">Cytoplasm</location>
    </subcellularLocation>
</comment>
<comment type="miscellaneous">
    <text evidence="1">The reaction produces a racemic mixture of D-glycero-alpha-D-manno-heptose 7-phosphate and D-glycero-beta-D-manno-heptose 7-phosphate.</text>
</comment>
<comment type="similarity">
    <text evidence="1">Belongs to the SIS family. GmhA subfamily.</text>
</comment>
<feature type="chain" id="PRO_1000071170" description="Phosphoheptose isomerase">
    <location>
        <begin position="1"/>
        <end position="186"/>
    </location>
</feature>
<feature type="domain" description="SIS" evidence="1">
    <location>
        <begin position="33"/>
        <end position="186"/>
    </location>
</feature>
<feature type="binding site" evidence="1">
    <location>
        <begin position="48"/>
        <end position="50"/>
    </location>
    <ligand>
        <name>substrate</name>
    </ligand>
</feature>
<feature type="binding site" evidence="1">
    <location>
        <position position="57"/>
    </location>
    <ligand>
        <name>Zn(2+)</name>
        <dbReference type="ChEBI" id="CHEBI:29105"/>
    </ligand>
</feature>
<feature type="binding site" evidence="1">
    <location>
        <position position="61"/>
    </location>
    <ligand>
        <name>substrate</name>
    </ligand>
</feature>
<feature type="binding site" evidence="1">
    <location>
        <position position="61"/>
    </location>
    <ligand>
        <name>Zn(2+)</name>
        <dbReference type="ChEBI" id="CHEBI:29105"/>
    </ligand>
</feature>
<feature type="binding site" evidence="1">
    <location>
        <begin position="90"/>
        <end position="91"/>
    </location>
    <ligand>
        <name>substrate</name>
    </ligand>
</feature>
<feature type="binding site" evidence="1">
    <location>
        <begin position="116"/>
        <end position="118"/>
    </location>
    <ligand>
        <name>substrate</name>
    </ligand>
</feature>
<feature type="binding site" evidence="1">
    <location>
        <position position="121"/>
    </location>
    <ligand>
        <name>substrate</name>
    </ligand>
</feature>
<feature type="binding site" evidence="1">
    <location>
        <position position="168"/>
    </location>
    <ligand>
        <name>substrate</name>
    </ligand>
</feature>
<feature type="binding site" evidence="1">
    <location>
        <position position="168"/>
    </location>
    <ligand>
        <name>Zn(2+)</name>
        <dbReference type="ChEBI" id="CHEBI:29105"/>
    </ligand>
</feature>
<feature type="binding site" evidence="1">
    <location>
        <position position="176"/>
    </location>
    <ligand>
        <name>Zn(2+)</name>
        <dbReference type="ChEBI" id="CHEBI:29105"/>
    </ligand>
</feature>
<sequence>MINLVEKEWQEHQKIAQESEILKGQIAKAGELLCECLKKGGKILICGNGGSAADAQHFAAELSGRYKKERKALAGIALTTDTSALSAIGNDYGFEFVFSRQVEALGNENDVLIGISTSGKSPNVLEAFKKAKELNMLCLGLSGKGGGMMNKLCDHNLVVPSDDTARIQEMHILIIHTLCQIIDEGF</sequence>